<feature type="chain" id="PRO_0000128185" description="Probable cytochrome c oxidase subunit 5C-1">
    <location>
        <begin position="1"/>
        <end position="64"/>
    </location>
</feature>
<feature type="transmembrane region" description="Helical" evidence="2">
    <location>
        <begin position="15"/>
        <end position="34"/>
    </location>
</feature>
<gene>
    <name type="ordered locus">At2g47380</name>
    <name type="ORF">T8I13.22</name>
</gene>
<keyword id="KW-0472">Membrane</keyword>
<keyword id="KW-0496">Mitochondrion</keyword>
<keyword id="KW-0999">Mitochondrion inner membrane</keyword>
<keyword id="KW-1185">Reference proteome</keyword>
<keyword id="KW-0812">Transmembrane</keyword>
<keyword id="KW-1133">Transmembrane helix</keyword>
<proteinExistence type="evidence at protein level"/>
<evidence type="ECO:0000250" key="1"/>
<evidence type="ECO:0000255" key="2"/>
<evidence type="ECO:0000305" key="3"/>
<sequence length="64" mass="7070">MAGHKVAHATLKGPSVVKELFIGLALGLAAGGLWKMHHWNEQRKTRTFYDLLERGEISVVAAEE</sequence>
<reference key="1">
    <citation type="journal article" date="1999" name="Nature">
        <title>Sequence and analysis of chromosome 2 of the plant Arabidopsis thaliana.</title>
        <authorList>
            <person name="Lin X."/>
            <person name="Kaul S."/>
            <person name="Rounsley S.D."/>
            <person name="Shea T.P."/>
            <person name="Benito M.-I."/>
            <person name="Town C.D."/>
            <person name="Fujii C.Y."/>
            <person name="Mason T.M."/>
            <person name="Bowman C.L."/>
            <person name="Barnstead M.E."/>
            <person name="Feldblyum T.V."/>
            <person name="Buell C.R."/>
            <person name="Ketchum K.A."/>
            <person name="Lee J.J."/>
            <person name="Ronning C.M."/>
            <person name="Koo H.L."/>
            <person name="Moffat K.S."/>
            <person name="Cronin L.A."/>
            <person name="Shen M."/>
            <person name="Pai G."/>
            <person name="Van Aken S."/>
            <person name="Umayam L."/>
            <person name="Tallon L.J."/>
            <person name="Gill J.E."/>
            <person name="Adams M.D."/>
            <person name="Carrera A.J."/>
            <person name="Creasy T.H."/>
            <person name="Goodman H.M."/>
            <person name="Somerville C.R."/>
            <person name="Copenhaver G.P."/>
            <person name="Preuss D."/>
            <person name="Nierman W.C."/>
            <person name="White O."/>
            <person name="Eisen J.A."/>
            <person name="Salzberg S.L."/>
            <person name="Fraser C.M."/>
            <person name="Venter J.C."/>
        </authorList>
    </citation>
    <scope>NUCLEOTIDE SEQUENCE [LARGE SCALE GENOMIC DNA]</scope>
    <source>
        <strain>cv. Columbia</strain>
    </source>
</reference>
<reference key="2">
    <citation type="journal article" date="2017" name="Plant J.">
        <title>Araport11: a complete reannotation of the Arabidopsis thaliana reference genome.</title>
        <authorList>
            <person name="Cheng C.Y."/>
            <person name="Krishnakumar V."/>
            <person name="Chan A.P."/>
            <person name="Thibaud-Nissen F."/>
            <person name="Schobel S."/>
            <person name="Town C.D."/>
        </authorList>
    </citation>
    <scope>GENOME REANNOTATION</scope>
    <source>
        <strain>cv. Columbia</strain>
    </source>
</reference>
<reference key="3">
    <citation type="journal article" date="2003" name="Science">
        <title>Empirical analysis of transcriptional activity in the Arabidopsis genome.</title>
        <authorList>
            <person name="Yamada K."/>
            <person name="Lim J."/>
            <person name="Dale J.M."/>
            <person name="Chen H."/>
            <person name="Shinn P."/>
            <person name="Palm C.J."/>
            <person name="Southwick A.M."/>
            <person name="Wu H.C."/>
            <person name="Kim C.J."/>
            <person name="Nguyen M."/>
            <person name="Pham P.K."/>
            <person name="Cheuk R.F."/>
            <person name="Karlin-Newmann G."/>
            <person name="Liu S.X."/>
            <person name="Lam B."/>
            <person name="Sakano H."/>
            <person name="Wu T."/>
            <person name="Yu G."/>
            <person name="Miranda M."/>
            <person name="Quach H.L."/>
            <person name="Tripp M."/>
            <person name="Chang C.H."/>
            <person name="Lee J.M."/>
            <person name="Toriumi M.J."/>
            <person name="Chan M.M."/>
            <person name="Tang C.C."/>
            <person name="Onodera C.S."/>
            <person name="Deng J.M."/>
            <person name="Akiyama K."/>
            <person name="Ansari Y."/>
            <person name="Arakawa T."/>
            <person name="Banh J."/>
            <person name="Banno F."/>
            <person name="Bowser L."/>
            <person name="Brooks S.Y."/>
            <person name="Carninci P."/>
            <person name="Chao Q."/>
            <person name="Choy N."/>
            <person name="Enju A."/>
            <person name="Goldsmith A.D."/>
            <person name="Gurjal M."/>
            <person name="Hansen N.F."/>
            <person name="Hayashizaki Y."/>
            <person name="Johnson-Hopson C."/>
            <person name="Hsuan V.W."/>
            <person name="Iida K."/>
            <person name="Karnes M."/>
            <person name="Khan S."/>
            <person name="Koesema E."/>
            <person name="Ishida J."/>
            <person name="Jiang P.X."/>
            <person name="Jones T."/>
            <person name="Kawai J."/>
            <person name="Kamiya A."/>
            <person name="Meyers C."/>
            <person name="Nakajima M."/>
            <person name="Narusaka M."/>
            <person name="Seki M."/>
            <person name="Sakurai T."/>
            <person name="Satou M."/>
            <person name="Tamse R."/>
            <person name="Vaysberg M."/>
            <person name="Wallender E.K."/>
            <person name="Wong C."/>
            <person name="Yamamura Y."/>
            <person name="Yuan S."/>
            <person name="Shinozaki K."/>
            <person name="Davis R.W."/>
            <person name="Theologis A."/>
            <person name="Ecker J.R."/>
        </authorList>
    </citation>
    <scope>NUCLEOTIDE SEQUENCE [LARGE SCALE MRNA]</scope>
    <source>
        <strain>cv. Columbia</strain>
    </source>
</reference>
<reference key="4">
    <citation type="journal article" date="2004" name="Plant Cell">
        <title>Experimental analysis of the Arabidopsis mitochondrial proteome highlights signaling and regulatory components, provides assessment of targeting prediction programs, and indicates plant-specific mitochondrial proteins.</title>
        <authorList>
            <person name="Heazlewood J.L."/>
            <person name="Tonti-Filippini J.S."/>
            <person name="Gout A.M."/>
            <person name="Day D.A."/>
            <person name="Whelan J."/>
            <person name="Millar A.H."/>
        </authorList>
    </citation>
    <scope>IDENTIFICATION BY MASS SPECTROMETRY</scope>
    <scope>SUBCELLULAR LOCATION [LARGE SCALE ANALYSIS]</scope>
    <source>
        <strain>cv. Landsberg erecta</strain>
    </source>
</reference>
<name>CX5C1_ARATH</name>
<organism>
    <name type="scientific">Arabidopsis thaliana</name>
    <name type="common">Mouse-ear cress</name>
    <dbReference type="NCBI Taxonomy" id="3702"/>
    <lineage>
        <taxon>Eukaryota</taxon>
        <taxon>Viridiplantae</taxon>
        <taxon>Streptophyta</taxon>
        <taxon>Embryophyta</taxon>
        <taxon>Tracheophyta</taxon>
        <taxon>Spermatophyta</taxon>
        <taxon>Magnoliopsida</taxon>
        <taxon>eudicotyledons</taxon>
        <taxon>Gunneridae</taxon>
        <taxon>Pentapetalae</taxon>
        <taxon>rosids</taxon>
        <taxon>malvids</taxon>
        <taxon>Brassicales</taxon>
        <taxon>Brassicaceae</taxon>
        <taxon>Camelineae</taxon>
        <taxon>Arabidopsis</taxon>
    </lineage>
</organism>
<comment type="function">
    <text evidence="1">This protein is one of the nuclear-coded polypeptide chains of cytochrome c oxidase, the terminal oxidase in mitochondrial electron transport.</text>
</comment>
<comment type="subcellular location">
    <subcellularLocation>
        <location evidence="1">Mitochondrion inner membrane</location>
    </subcellularLocation>
</comment>
<comment type="similarity">
    <text evidence="3">Belongs to the cytochrome c oxidase subunit 5C family.</text>
</comment>
<accession>O22912</accession>
<dbReference type="EMBL" id="AC002337">
    <property type="protein sequence ID" value="AAB63838.1"/>
    <property type="molecule type" value="Genomic_DNA"/>
</dbReference>
<dbReference type="EMBL" id="CP002685">
    <property type="protein sequence ID" value="AEC10834.1"/>
    <property type="molecule type" value="Genomic_DNA"/>
</dbReference>
<dbReference type="EMBL" id="CP002685">
    <property type="protein sequence ID" value="ANM62727.1"/>
    <property type="molecule type" value="Genomic_DNA"/>
</dbReference>
<dbReference type="EMBL" id="AY070752">
    <property type="protein sequence ID" value="AAL50091.1"/>
    <property type="molecule type" value="mRNA"/>
</dbReference>
<dbReference type="EMBL" id="AY093734">
    <property type="protein sequence ID" value="AAM10358.1"/>
    <property type="molecule type" value="mRNA"/>
</dbReference>
<dbReference type="PIR" id="E84914">
    <property type="entry name" value="E84914"/>
</dbReference>
<dbReference type="RefSeq" id="NP_001324866.1">
    <property type="nucleotide sequence ID" value="NM_001337259.1"/>
</dbReference>
<dbReference type="RefSeq" id="NP_182260.1">
    <property type="nucleotide sequence ID" value="NM_130306.3"/>
</dbReference>
<dbReference type="SMR" id="O22912"/>
<dbReference type="FunCoup" id="O22912">
    <property type="interactions" value="791"/>
</dbReference>
<dbReference type="IntAct" id="O22912">
    <property type="interactions" value="1"/>
</dbReference>
<dbReference type="STRING" id="3702.O22912"/>
<dbReference type="PaxDb" id="3702-AT2G47380.1"/>
<dbReference type="ProteomicsDB" id="220425"/>
<dbReference type="DNASU" id="819351"/>
<dbReference type="EnsemblPlants" id="AT2G47380.1">
    <property type="protein sequence ID" value="AT2G47380.1"/>
    <property type="gene ID" value="AT2G47380"/>
</dbReference>
<dbReference type="EnsemblPlants" id="AT2G47380.2">
    <property type="protein sequence ID" value="AT2G47380.2"/>
    <property type="gene ID" value="AT2G47380"/>
</dbReference>
<dbReference type="GeneID" id="819351"/>
<dbReference type="Gramene" id="AT2G47380.1">
    <property type="protein sequence ID" value="AT2G47380.1"/>
    <property type="gene ID" value="AT2G47380"/>
</dbReference>
<dbReference type="Gramene" id="AT2G47380.2">
    <property type="protein sequence ID" value="AT2G47380.2"/>
    <property type="gene ID" value="AT2G47380"/>
</dbReference>
<dbReference type="KEGG" id="ath:AT2G47380"/>
<dbReference type="Araport" id="AT2G47380"/>
<dbReference type="TAIR" id="AT2G47380"/>
<dbReference type="eggNOG" id="ENOG502S8H1">
    <property type="taxonomic scope" value="Eukaryota"/>
</dbReference>
<dbReference type="HOGENOM" id="CLU_177335_1_0_1"/>
<dbReference type="InParanoid" id="O22912"/>
<dbReference type="OMA" id="GTLWKMH"/>
<dbReference type="OrthoDB" id="506921at2759"/>
<dbReference type="PhylomeDB" id="O22912"/>
<dbReference type="BioCyc" id="ARA:AT2G47380-MONOMER"/>
<dbReference type="BioCyc" id="MetaCyc:AT2G47380-MONOMER"/>
<dbReference type="PRO" id="PR:O22912"/>
<dbReference type="Proteomes" id="UP000006548">
    <property type="component" value="Chromosome 2"/>
</dbReference>
<dbReference type="ExpressionAtlas" id="O22912">
    <property type="expression patterns" value="baseline and differential"/>
</dbReference>
<dbReference type="GO" id="GO:0005743">
    <property type="term" value="C:mitochondrial inner membrane"/>
    <property type="evidence" value="ECO:0007669"/>
    <property type="project" value="UniProtKB-SubCell"/>
</dbReference>
<dbReference type="GO" id="GO:0005739">
    <property type="term" value="C:mitochondrion"/>
    <property type="evidence" value="ECO:0007005"/>
    <property type="project" value="TAIR"/>
</dbReference>
<dbReference type="InterPro" id="IPR008432">
    <property type="entry name" value="COX5C"/>
</dbReference>
<dbReference type="PANTHER" id="PTHR34372">
    <property type="entry name" value="CYTOCHROME C OXIDASE SUBUNIT 5C-2-RELATED"/>
    <property type="match status" value="1"/>
</dbReference>
<dbReference type="PANTHER" id="PTHR34372:SF2">
    <property type="entry name" value="CYTOCHROME C OXIDASE SUBUNIT 5C-2-RELATED"/>
    <property type="match status" value="1"/>
</dbReference>
<dbReference type="PIRSF" id="PIRSF038131">
    <property type="entry name" value="COX5C"/>
    <property type="match status" value="1"/>
</dbReference>
<protein>
    <recommendedName>
        <fullName>Probable cytochrome c oxidase subunit 5C-1</fullName>
    </recommendedName>
    <alternativeName>
        <fullName>Cytochrome c oxidase polypeptide Vc-1</fullName>
    </alternativeName>
</protein>